<accession>Q6C8F5</accession>
<name>CEF1_YARLI</name>
<reference key="1">
    <citation type="journal article" date="2004" name="Nature">
        <title>Genome evolution in yeasts.</title>
        <authorList>
            <person name="Dujon B."/>
            <person name="Sherman D."/>
            <person name="Fischer G."/>
            <person name="Durrens P."/>
            <person name="Casaregola S."/>
            <person name="Lafontaine I."/>
            <person name="de Montigny J."/>
            <person name="Marck C."/>
            <person name="Neuveglise C."/>
            <person name="Talla E."/>
            <person name="Goffard N."/>
            <person name="Frangeul L."/>
            <person name="Aigle M."/>
            <person name="Anthouard V."/>
            <person name="Babour A."/>
            <person name="Barbe V."/>
            <person name="Barnay S."/>
            <person name="Blanchin S."/>
            <person name="Beckerich J.-M."/>
            <person name="Beyne E."/>
            <person name="Bleykasten C."/>
            <person name="Boisrame A."/>
            <person name="Boyer J."/>
            <person name="Cattolico L."/>
            <person name="Confanioleri F."/>
            <person name="de Daruvar A."/>
            <person name="Despons L."/>
            <person name="Fabre E."/>
            <person name="Fairhead C."/>
            <person name="Ferry-Dumazet H."/>
            <person name="Groppi A."/>
            <person name="Hantraye F."/>
            <person name="Hennequin C."/>
            <person name="Jauniaux N."/>
            <person name="Joyet P."/>
            <person name="Kachouri R."/>
            <person name="Kerrest A."/>
            <person name="Koszul R."/>
            <person name="Lemaire M."/>
            <person name="Lesur I."/>
            <person name="Ma L."/>
            <person name="Muller H."/>
            <person name="Nicaud J.-M."/>
            <person name="Nikolski M."/>
            <person name="Oztas S."/>
            <person name="Ozier-Kalogeropoulos O."/>
            <person name="Pellenz S."/>
            <person name="Potier S."/>
            <person name="Richard G.-F."/>
            <person name="Straub M.-L."/>
            <person name="Suleau A."/>
            <person name="Swennen D."/>
            <person name="Tekaia F."/>
            <person name="Wesolowski-Louvel M."/>
            <person name="Westhof E."/>
            <person name="Wirth B."/>
            <person name="Zeniou-Meyer M."/>
            <person name="Zivanovic Y."/>
            <person name="Bolotin-Fukuhara M."/>
            <person name="Thierry A."/>
            <person name="Bouchier C."/>
            <person name="Caudron B."/>
            <person name="Scarpelli C."/>
            <person name="Gaillardin C."/>
            <person name="Weissenbach J."/>
            <person name="Wincker P."/>
            <person name="Souciet J.-L."/>
        </authorList>
    </citation>
    <scope>NUCLEOTIDE SEQUENCE [LARGE SCALE GENOMIC DNA]</scope>
    <source>
        <strain>CLIB 122 / E 150</strain>
    </source>
</reference>
<evidence type="ECO:0000250" key="1"/>
<evidence type="ECO:0000255" key="2"/>
<evidence type="ECO:0000255" key="3">
    <source>
        <dbReference type="PROSITE-ProRule" id="PRU00625"/>
    </source>
</evidence>
<evidence type="ECO:0000256" key="4">
    <source>
        <dbReference type="SAM" id="MobiDB-lite"/>
    </source>
</evidence>
<evidence type="ECO:0000305" key="5"/>
<sequence>MAYVKGGVWTNVEDEILRAAISKYGLNQWARVSSLLARKTAKQCKARWTEWLDPTIKKIEWSREEDEKLLHLAKIFPAQWRTIAPFVGRTAHQCIQRYERLLAEVAGEVEGEDASAVASAPATEGDQFPETKPARPDAVDMDEDEKEMLSEARARLANTQGKKAKRKDRERMLEDSRRLSQLQKRRELKNAGIDTRLSKRKKNEMDYNADIPFEHKPARGFYSTAEEEHENDSERLQHKQMHRTAADAPGPSQKRDKATLSKEDEEKKKEQQKTASAQRTLQLAQLDLQDQISKRRKLNLPEPQIQDQEMEEIVKLGAQGEALHKRYADGVASSLSGDYDDKIVDDSIRTPQIQQSKVKTTIEEIKAMENRSVLGKRTEEEVDDEAEADKDGFAIPKLPSNKAVTSVSAGSDIGGATPAGMTPIKRDALGLVGSVEATPVSILRQKLASLPKPKNDFEITAEDEEEDEEADKEKKPTDNLPVDKGEQARLKRIAEEQERQEALKTRSQTLQRGLPRATVPEVTYNDAIGQEVVALLREEELRFPNKGDSVALMQSEFSLDDLVDAETLIEMELMEGDEQEVQEEGIKTAALPGTVARSDESEEEFKTRVEIISDQLVETLTSLAETCQTEETALVDKFKAYAKRQATLSKKLTSRWSQLESVEVEIAVFSELARMEEIAIEQRSAALQEEVDWLVKKERAAQDKYRELKVKEQAAKGGH</sequence>
<protein>
    <recommendedName>
        <fullName>Pre-mRNA-splicing factor CEF1</fullName>
    </recommendedName>
</protein>
<comment type="function">
    <text evidence="1">Involved in pre-mRNA splicing and cell cycle control.</text>
</comment>
<comment type="subunit">
    <text evidence="1">Associated with the spliceosome.</text>
</comment>
<comment type="subcellular location">
    <subcellularLocation>
        <location evidence="1">Cytoplasm</location>
    </subcellularLocation>
    <subcellularLocation>
        <location evidence="3">Nucleus</location>
    </subcellularLocation>
</comment>
<comment type="similarity">
    <text evidence="5">Belongs to the CEF1 family.</text>
</comment>
<proteinExistence type="inferred from homology"/>
<keyword id="KW-0175">Coiled coil</keyword>
<keyword id="KW-0963">Cytoplasm</keyword>
<keyword id="KW-0238">DNA-binding</keyword>
<keyword id="KW-0507">mRNA processing</keyword>
<keyword id="KW-0508">mRNA splicing</keyword>
<keyword id="KW-0539">Nucleus</keyword>
<keyword id="KW-1185">Reference proteome</keyword>
<keyword id="KW-0677">Repeat</keyword>
<keyword id="KW-0747">Spliceosome</keyword>
<dbReference type="EMBL" id="CR382130">
    <property type="protein sequence ID" value="CAG81249.1"/>
    <property type="molecule type" value="Genomic_DNA"/>
</dbReference>
<dbReference type="RefSeq" id="XP_503057.1">
    <property type="nucleotide sequence ID" value="XM_503057.1"/>
</dbReference>
<dbReference type="SMR" id="Q6C8F5"/>
<dbReference type="FunCoup" id="Q6C8F5">
    <property type="interactions" value="124"/>
</dbReference>
<dbReference type="STRING" id="284591.Q6C8F5"/>
<dbReference type="EnsemblFungi" id="CAG81249">
    <property type="protein sequence ID" value="CAG81249"/>
    <property type="gene ID" value="YALI0_D20086g"/>
</dbReference>
<dbReference type="KEGG" id="yli:2911197"/>
<dbReference type="VEuPathDB" id="FungiDB:YALI0_D20086g"/>
<dbReference type="HOGENOM" id="CLU_009082_0_0_1"/>
<dbReference type="InParanoid" id="Q6C8F5"/>
<dbReference type="OMA" id="KQVKARW"/>
<dbReference type="OrthoDB" id="95747at4891"/>
<dbReference type="Proteomes" id="UP000001300">
    <property type="component" value="Chromosome D"/>
</dbReference>
<dbReference type="GO" id="GO:0005829">
    <property type="term" value="C:cytosol"/>
    <property type="evidence" value="ECO:0007669"/>
    <property type="project" value="EnsemblFungi"/>
</dbReference>
<dbReference type="GO" id="GO:0140602">
    <property type="term" value="C:nucleolar peripheral inclusion body"/>
    <property type="evidence" value="ECO:0007669"/>
    <property type="project" value="EnsemblFungi"/>
</dbReference>
<dbReference type="GO" id="GO:0071014">
    <property type="term" value="C:post-mRNA release spliceosomal complex"/>
    <property type="evidence" value="ECO:0007669"/>
    <property type="project" value="EnsemblFungi"/>
</dbReference>
<dbReference type="GO" id="GO:0000974">
    <property type="term" value="C:Prp19 complex"/>
    <property type="evidence" value="ECO:0000318"/>
    <property type="project" value="GO_Central"/>
</dbReference>
<dbReference type="GO" id="GO:0005681">
    <property type="term" value="C:spliceosomal complex"/>
    <property type="evidence" value="ECO:0000318"/>
    <property type="project" value="GO_Central"/>
</dbReference>
<dbReference type="GO" id="GO:0003677">
    <property type="term" value="F:DNA binding"/>
    <property type="evidence" value="ECO:0007669"/>
    <property type="project" value="UniProtKB-KW"/>
</dbReference>
<dbReference type="GO" id="GO:0045292">
    <property type="term" value="P:mRNA cis splicing, via spliceosome"/>
    <property type="evidence" value="ECO:0007669"/>
    <property type="project" value="EnsemblFungi"/>
</dbReference>
<dbReference type="GO" id="GO:0000398">
    <property type="term" value="P:mRNA splicing, via spliceosome"/>
    <property type="evidence" value="ECO:0000318"/>
    <property type="project" value="GO_Central"/>
</dbReference>
<dbReference type="CDD" id="cd00167">
    <property type="entry name" value="SANT"/>
    <property type="match status" value="1"/>
</dbReference>
<dbReference type="CDD" id="cd11659">
    <property type="entry name" value="SANT_CDC5_II"/>
    <property type="match status" value="1"/>
</dbReference>
<dbReference type="FunFam" id="1.10.10.60:FF:000021">
    <property type="entry name" value="CDC5 cell division cycle 5-like"/>
    <property type="match status" value="1"/>
</dbReference>
<dbReference type="Gene3D" id="1.10.10.60">
    <property type="entry name" value="Homeodomain-like"/>
    <property type="match status" value="2"/>
</dbReference>
<dbReference type="InterPro" id="IPR047242">
    <property type="entry name" value="CDC5L/Cef1"/>
</dbReference>
<dbReference type="InterPro" id="IPR021786">
    <property type="entry name" value="Cdc5p/Cef1_C"/>
</dbReference>
<dbReference type="InterPro" id="IPR009057">
    <property type="entry name" value="Homeodomain-like_sf"/>
</dbReference>
<dbReference type="InterPro" id="IPR017930">
    <property type="entry name" value="Myb_dom"/>
</dbReference>
<dbReference type="InterPro" id="IPR001005">
    <property type="entry name" value="SANT/Myb"/>
</dbReference>
<dbReference type="InterPro" id="IPR047240">
    <property type="entry name" value="SANT_CDC5L_II"/>
</dbReference>
<dbReference type="PANTHER" id="PTHR45885">
    <property type="entry name" value="CELL DIVISION CYCLE 5-LIKE PROTEIN"/>
    <property type="match status" value="1"/>
</dbReference>
<dbReference type="PANTHER" id="PTHR45885:SF1">
    <property type="entry name" value="CELL DIVISION CYCLE 5-LIKE PROTEIN"/>
    <property type="match status" value="1"/>
</dbReference>
<dbReference type="Pfam" id="PF11831">
    <property type="entry name" value="Myb_Cef"/>
    <property type="match status" value="1"/>
</dbReference>
<dbReference type="Pfam" id="PF13921">
    <property type="entry name" value="Myb_DNA-bind_6"/>
    <property type="match status" value="1"/>
</dbReference>
<dbReference type="SMART" id="SM00717">
    <property type="entry name" value="SANT"/>
    <property type="match status" value="2"/>
</dbReference>
<dbReference type="SUPFAM" id="SSF46689">
    <property type="entry name" value="Homeodomain-like"/>
    <property type="match status" value="1"/>
</dbReference>
<dbReference type="PROSITE" id="PS51294">
    <property type="entry name" value="HTH_MYB"/>
    <property type="match status" value="2"/>
</dbReference>
<organism>
    <name type="scientific">Yarrowia lipolytica (strain CLIB 122 / E 150)</name>
    <name type="common">Yeast</name>
    <name type="synonym">Candida lipolytica</name>
    <dbReference type="NCBI Taxonomy" id="284591"/>
    <lineage>
        <taxon>Eukaryota</taxon>
        <taxon>Fungi</taxon>
        <taxon>Dikarya</taxon>
        <taxon>Ascomycota</taxon>
        <taxon>Saccharomycotina</taxon>
        <taxon>Dipodascomycetes</taxon>
        <taxon>Dipodascales</taxon>
        <taxon>Dipodascales incertae sedis</taxon>
        <taxon>Yarrowia</taxon>
    </lineage>
</organism>
<gene>
    <name type="primary">CEF1</name>
    <name type="ordered locus">YALI0D20086g</name>
</gene>
<feature type="chain" id="PRO_0000197106" description="Pre-mRNA-splicing factor CEF1">
    <location>
        <begin position="1"/>
        <end position="719"/>
    </location>
</feature>
<feature type="domain" description="HTH myb-type 1" evidence="3">
    <location>
        <begin position="1"/>
        <end position="56"/>
    </location>
</feature>
<feature type="domain" description="HTH myb-type 2" evidence="3">
    <location>
        <begin position="57"/>
        <end position="106"/>
    </location>
</feature>
<feature type="DNA-binding region" description="H-T-H motif" evidence="3">
    <location>
        <begin position="29"/>
        <end position="52"/>
    </location>
</feature>
<feature type="DNA-binding region" description="H-T-H motif" evidence="3">
    <location>
        <begin position="80"/>
        <end position="102"/>
    </location>
</feature>
<feature type="region of interest" description="Disordered" evidence="4">
    <location>
        <begin position="113"/>
        <end position="282"/>
    </location>
</feature>
<feature type="region of interest" description="Disordered" evidence="4">
    <location>
        <begin position="376"/>
        <end position="398"/>
    </location>
</feature>
<feature type="region of interest" description="Disordered" evidence="4">
    <location>
        <begin position="446"/>
        <end position="487"/>
    </location>
</feature>
<feature type="coiled-coil region" evidence="2">
    <location>
        <begin position="252"/>
        <end position="286"/>
    </location>
</feature>
<feature type="coiled-coil region" evidence="2">
    <location>
        <begin position="687"/>
        <end position="716"/>
    </location>
</feature>
<feature type="compositionally biased region" description="Basic and acidic residues" evidence="4">
    <location>
        <begin position="167"/>
        <end position="189"/>
    </location>
</feature>
<feature type="compositionally biased region" description="Basic and acidic residues" evidence="4">
    <location>
        <begin position="253"/>
        <end position="272"/>
    </location>
</feature>
<feature type="compositionally biased region" description="Acidic residues" evidence="4">
    <location>
        <begin position="459"/>
        <end position="470"/>
    </location>
</feature>
<feature type="compositionally biased region" description="Basic and acidic residues" evidence="4">
    <location>
        <begin position="471"/>
        <end position="487"/>
    </location>
</feature>